<protein>
    <recommendedName>
        <fullName evidence="1">Ribosomal RNA small subunit methyltransferase H</fullName>
        <ecNumber evidence="1">2.1.1.199</ecNumber>
    </recommendedName>
    <alternativeName>
        <fullName evidence="1">16S rRNA m(4)C1402 methyltransferase</fullName>
    </alternativeName>
    <alternativeName>
        <fullName evidence="1">rRNA (cytosine-N(4)-)-methyltransferase RsmH</fullName>
    </alternativeName>
</protein>
<name>RSMH_PSET1</name>
<feature type="chain" id="PRO_0000223554" description="Ribosomal RNA small subunit methyltransferase H">
    <location>
        <begin position="1"/>
        <end position="312"/>
    </location>
</feature>
<feature type="binding site" evidence="1">
    <location>
        <begin position="35"/>
        <end position="37"/>
    </location>
    <ligand>
        <name>S-adenosyl-L-methionine</name>
        <dbReference type="ChEBI" id="CHEBI:59789"/>
    </ligand>
</feature>
<feature type="binding site" evidence="1">
    <location>
        <position position="55"/>
    </location>
    <ligand>
        <name>S-adenosyl-L-methionine</name>
        <dbReference type="ChEBI" id="CHEBI:59789"/>
    </ligand>
</feature>
<feature type="binding site" evidence="1">
    <location>
        <position position="80"/>
    </location>
    <ligand>
        <name>S-adenosyl-L-methionine</name>
        <dbReference type="ChEBI" id="CHEBI:59789"/>
    </ligand>
</feature>
<feature type="binding site" evidence="1">
    <location>
        <position position="102"/>
    </location>
    <ligand>
        <name>S-adenosyl-L-methionine</name>
        <dbReference type="ChEBI" id="CHEBI:59789"/>
    </ligand>
</feature>
<feature type="binding site" evidence="1">
    <location>
        <position position="109"/>
    </location>
    <ligand>
        <name>S-adenosyl-L-methionine</name>
        <dbReference type="ChEBI" id="CHEBI:59789"/>
    </ligand>
</feature>
<comment type="function">
    <text evidence="1">Specifically methylates the N4 position of cytidine in position 1402 (C1402) of 16S rRNA.</text>
</comment>
<comment type="catalytic activity">
    <reaction evidence="1">
        <text>cytidine(1402) in 16S rRNA + S-adenosyl-L-methionine = N(4)-methylcytidine(1402) in 16S rRNA + S-adenosyl-L-homocysteine + H(+)</text>
        <dbReference type="Rhea" id="RHEA:42928"/>
        <dbReference type="Rhea" id="RHEA-COMP:10286"/>
        <dbReference type="Rhea" id="RHEA-COMP:10287"/>
        <dbReference type="ChEBI" id="CHEBI:15378"/>
        <dbReference type="ChEBI" id="CHEBI:57856"/>
        <dbReference type="ChEBI" id="CHEBI:59789"/>
        <dbReference type="ChEBI" id="CHEBI:74506"/>
        <dbReference type="ChEBI" id="CHEBI:82748"/>
        <dbReference type="EC" id="2.1.1.199"/>
    </reaction>
</comment>
<comment type="subcellular location">
    <subcellularLocation>
        <location evidence="1">Cytoplasm</location>
    </subcellularLocation>
</comment>
<comment type="similarity">
    <text evidence="1">Belongs to the methyltransferase superfamily. RsmH family.</text>
</comment>
<evidence type="ECO:0000255" key="1">
    <source>
        <dbReference type="HAMAP-Rule" id="MF_01007"/>
    </source>
</evidence>
<sequence length="312" mass="34462">MTAQFEHVSVLMDETIDALAIKPDGIYMDGTFGRGGHSGQILARLGSEGRLQAIDQDPQAIKSAEKFADDPRFAIAHTRFSNLYGVAEQNDLIGKVDGILLDIGVSSPQLDDALRGFSFMKDGPLDMRMDPTTGRSAAQWLAEAELDDITHVIKKLGEEKFGKRIAHKVLEVREHTPITTTKQLADLVDEAVPVKDKFKHPATRTFQAIRIYINSELEEIQTALQSAIKVLKPGGRLVVISFHSLEDRIVKQFIRKQSRGETLPRGLPLTDAQINQNLTLKAVGKAIKPSAAEVERNPRSRSSVLRIAQRLG</sequence>
<gene>
    <name evidence="1" type="primary">rsmH</name>
    <name type="synonym">mraW</name>
    <name type="ordered locus">PSHAa2512</name>
</gene>
<dbReference type="EC" id="2.1.1.199" evidence="1"/>
<dbReference type="EMBL" id="CR954246">
    <property type="protein sequence ID" value="CAI87560.1"/>
    <property type="molecule type" value="Genomic_DNA"/>
</dbReference>
<dbReference type="SMR" id="Q3IFZ6"/>
<dbReference type="STRING" id="326442.PSHAa2512"/>
<dbReference type="KEGG" id="pha:PSHAa2512"/>
<dbReference type="PATRIC" id="fig|326442.8.peg.2422"/>
<dbReference type="eggNOG" id="COG0275">
    <property type="taxonomic scope" value="Bacteria"/>
</dbReference>
<dbReference type="HOGENOM" id="CLU_038422_2_0_6"/>
<dbReference type="BioCyc" id="PHAL326442:PSHA_RS12370-MONOMER"/>
<dbReference type="Proteomes" id="UP000006843">
    <property type="component" value="Chromosome I"/>
</dbReference>
<dbReference type="GO" id="GO:0005737">
    <property type="term" value="C:cytoplasm"/>
    <property type="evidence" value="ECO:0007669"/>
    <property type="project" value="UniProtKB-SubCell"/>
</dbReference>
<dbReference type="GO" id="GO:0071424">
    <property type="term" value="F:rRNA (cytosine-N4-)-methyltransferase activity"/>
    <property type="evidence" value="ECO:0007669"/>
    <property type="project" value="UniProtKB-UniRule"/>
</dbReference>
<dbReference type="GO" id="GO:0070475">
    <property type="term" value="P:rRNA base methylation"/>
    <property type="evidence" value="ECO:0007669"/>
    <property type="project" value="UniProtKB-UniRule"/>
</dbReference>
<dbReference type="FunFam" id="1.10.150.170:FF:000001">
    <property type="entry name" value="Ribosomal RNA small subunit methyltransferase H"/>
    <property type="match status" value="1"/>
</dbReference>
<dbReference type="Gene3D" id="1.10.150.170">
    <property type="entry name" value="Putative methyltransferase TM0872, insert domain"/>
    <property type="match status" value="1"/>
</dbReference>
<dbReference type="Gene3D" id="3.40.50.150">
    <property type="entry name" value="Vaccinia Virus protein VP39"/>
    <property type="match status" value="1"/>
</dbReference>
<dbReference type="HAMAP" id="MF_01007">
    <property type="entry name" value="16SrRNA_methyltr_H"/>
    <property type="match status" value="1"/>
</dbReference>
<dbReference type="InterPro" id="IPR002903">
    <property type="entry name" value="RsmH"/>
</dbReference>
<dbReference type="InterPro" id="IPR023397">
    <property type="entry name" value="SAM-dep_MeTrfase_MraW_recog"/>
</dbReference>
<dbReference type="InterPro" id="IPR029063">
    <property type="entry name" value="SAM-dependent_MTases_sf"/>
</dbReference>
<dbReference type="NCBIfam" id="TIGR00006">
    <property type="entry name" value="16S rRNA (cytosine(1402)-N(4))-methyltransferase RsmH"/>
    <property type="match status" value="1"/>
</dbReference>
<dbReference type="PANTHER" id="PTHR11265:SF0">
    <property type="entry name" value="12S RRNA N4-METHYLCYTIDINE METHYLTRANSFERASE"/>
    <property type="match status" value="1"/>
</dbReference>
<dbReference type="PANTHER" id="PTHR11265">
    <property type="entry name" value="S-ADENOSYL-METHYLTRANSFERASE MRAW"/>
    <property type="match status" value="1"/>
</dbReference>
<dbReference type="Pfam" id="PF01795">
    <property type="entry name" value="Methyltransf_5"/>
    <property type="match status" value="1"/>
</dbReference>
<dbReference type="PIRSF" id="PIRSF004486">
    <property type="entry name" value="MraW"/>
    <property type="match status" value="1"/>
</dbReference>
<dbReference type="SUPFAM" id="SSF81799">
    <property type="entry name" value="Putative methyltransferase TM0872, insert domain"/>
    <property type="match status" value="1"/>
</dbReference>
<dbReference type="SUPFAM" id="SSF53335">
    <property type="entry name" value="S-adenosyl-L-methionine-dependent methyltransferases"/>
    <property type="match status" value="1"/>
</dbReference>
<reference key="1">
    <citation type="journal article" date="2005" name="Genome Res.">
        <title>Coping with cold: the genome of the versatile marine Antarctica bacterium Pseudoalteromonas haloplanktis TAC125.</title>
        <authorList>
            <person name="Medigue C."/>
            <person name="Krin E."/>
            <person name="Pascal G."/>
            <person name="Barbe V."/>
            <person name="Bernsel A."/>
            <person name="Bertin P.N."/>
            <person name="Cheung F."/>
            <person name="Cruveiller S."/>
            <person name="D'Amico S."/>
            <person name="Duilio A."/>
            <person name="Fang G."/>
            <person name="Feller G."/>
            <person name="Ho C."/>
            <person name="Mangenot S."/>
            <person name="Marino G."/>
            <person name="Nilsson J."/>
            <person name="Parrilli E."/>
            <person name="Rocha E.P.C."/>
            <person name="Rouy Z."/>
            <person name="Sekowska A."/>
            <person name="Tutino M.L."/>
            <person name="Vallenet D."/>
            <person name="von Heijne G."/>
            <person name="Danchin A."/>
        </authorList>
    </citation>
    <scope>NUCLEOTIDE SEQUENCE [LARGE SCALE GENOMIC DNA]</scope>
    <source>
        <strain>TAC 125</strain>
    </source>
</reference>
<proteinExistence type="inferred from homology"/>
<accession>Q3IFZ6</accession>
<organism>
    <name type="scientific">Pseudoalteromonas translucida (strain TAC 125)</name>
    <dbReference type="NCBI Taxonomy" id="326442"/>
    <lineage>
        <taxon>Bacteria</taxon>
        <taxon>Pseudomonadati</taxon>
        <taxon>Pseudomonadota</taxon>
        <taxon>Gammaproteobacteria</taxon>
        <taxon>Alteromonadales</taxon>
        <taxon>Pseudoalteromonadaceae</taxon>
        <taxon>Pseudoalteromonas</taxon>
    </lineage>
</organism>
<keyword id="KW-0963">Cytoplasm</keyword>
<keyword id="KW-0489">Methyltransferase</keyword>
<keyword id="KW-1185">Reference proteome</keyword>
<keyword id="KW-0698">rRNA processing</keyword>
<keyword id="KW-0949">S-adenosyl-L-methionine</keyword>
<keyword id="KW-0808">Transferase</keyword>